<accession>B1M325</accession>
<comment type="function">
    <text evidence="1">Catalyzes the anti-1,4-elimination of the C-3 phosphate and the C-6 proR hydrogen from 5-enolpyruvylshikimate-3-phosphate (EPSP) to yield chorismate, which is the branch point compound that serves as the starting substrate for the three terminal pathways of aromatic amino acid biosynthesis. This reaction introduces a second double bond into the aromatic ring system.</text>
</comment>
<comment type="catalytic activity">
    <reaction evidence="1">
        <text>5-O-(1-carboxyvinyl)-3-phosphoshikimate = chorismate + phosphate</text>
        <dbReference type="Rhea" id="RHEA:21020"/>
        <dbReference type="ChEBI" id="CHEBI:29748"/>
        <dbReference type="ChEBI" id="CHEBI:43474"/>
        <dbReference type="ChEBI" id="CHEBI:57701"/>
        <dbReference type="EC" id="4.2.3.5"/>
    </reaction>
</comment>
<comment type="cofactor">
    <cofactor evidence="1">
        <name>FMNH2</name>
        <dbReference type="ChEBI" id="CHEBI:57618"/>
    </cofactor>
    <text evidence="1">Reduced FMN (FMNH(2)).</text>
</comment>
<comment type="pathway">
    <text evidence="1">Metabolic intermediate biosynthesis; chorismate biosynthesis; chorismate from D-erythrose 4-phosphate and phosphoenolpyruvate: step 7/7.</text>
</comment>
<comment type="subunit">
    <text evidence="1">Homotetramer.</text>
</comment>
<comment type="similarity">
    <text evidence="1">Belongs to the chorismate synthase family.</text>
</comment>
<reference key="1">
    <citation type="submission" date="2008-03" db="EMBL/GenBank/DDBJ databases">
        <title>Complete sequence of chromosome of Methylobacterium radiotolerans JCM 2831.</title>
        <authorList>
            <consortium name="US DOE Joint Genome Institute"/>
            <person name="Copeland A."/>
            <person name="Lucas S."/>
            <person name="Lapidus A."/>
            <person name="Glavina del Rio T."/>
            <person name="Dalin E."/>
            <person name="Tice H."/>
            <person name="Bruce D."/>
            <person name="Goodwin L."/>
            <person name="Pitluck S."/>
            <person name="Kiss H."/>
            <person name="Brettin T."/>
            <person name="Detter J.C."/>
            <person name="Han C."/>
            <person name="Kuske C.R."/>
            <person name="Schmutz J."/>
            <person name="Larimer F."/>
            <person name="Land M."/>
            <person name="Hauser L."/>
            <person name="Kyrpides N."/>
            <person name="Mikhailova N."/>
            <person name="Marx C.J."/>
            <person name="Richardson P."/>
        </authorList>
    </citation>
    <scope>NUCLEOTIDE SEQUENCE [LARGE SCALE GENOMIC DNA]</scope>
    <source>
        <strain>ATCC 27329 / DSM 1819 / JCM 2831 / NBRC 15690 / NCIMB 10815 / 0-1</strain>
    </source>
</reference>
<dbReference type="EC" id="4.2.3.5" evidence="1"/>
<dbReference type="EMBL" id="CP001001">
    <property type="protein sequence ID" value="ACB24741.1"/>
    <property type="molecule type" value="Genomic_DNA"/>
</dbReference>
<dbReference type="RefSeq" id="WP_012319710.1">
    <property type="nucleotide sequence ID" value="NC_010505.1"/>
</dbReference>
<dbReference type="SMR" id="B1M325"/>
<dbReference type="STRING" id="426355.Mrad2831_2757"/>
<dbReference type="GeneID" id="6138800"/>
<dbReference type="KEGG" id="mrd:Mrad2831_2757"/>
<dbReference type="PATRIC" id="fig|426355.14.peg.2820"/>
<dbReference type="eggNOG" id="COG0082">
    <property type="taxonomic scope" value="Bacteria"/>
</dbReference>
<dbReference type="HOGENOM" id="CLU_034547_0_0_5"/>
<dbReference type="OrthoDB" id="9771806at2"/>
<dbReference type="UniPathway" id="UPA00053">
    <property type="reaction ID" value="UER00090"/>
</dbReference>
<dbReference type="Proteomes" id="UP000006589">
    <property type="component" value="Chromosome"/>
</dbReference>
<dbReference type="GO" id="GO:0005829">
    <property type="term" value="C:cytosol"/>
    <property type="evidence" value="ECO:0007669"/>
    <property type="project" value="TreeGrafter"/>
</dbReference>
<dbReference type="GO" id="GO:0004107">
    <property type="term" value="F:chorismate synthase activity"/>
    <property type="evidence" value="ECO:0007669"/>
    <property type="project" value="UniProtKB-UniRule"/>
</dbReference>
<dbReference type="GO" id="GO:0010181">
    <property type="term" value="F:FMN binding"/>
    <property type="evidence" value="ECO:0007669"/>
    <property type="project" value="TreeGrafter"/>
</dbReference>
<dbReference type="GO" id="GO:0008652">
    <property type="term" value="P:amino acid biosynthetic process"/>
    <property type="evidence" value="ECO:0007669"/>
    <property type="project" value="UniProtKB-KW"/>
</dbReference>
<dbReference type="GO" id="GO:0009073">
    <property type="term" value="P:aromatic amino acid family biosynthetic process"/>
    <property type="evidence" value="ECO:0007669"/>
    <property type="project" value="UniProtKB-KW"/>
</dbReference>
<dbReference type="GO" id="GO:0009423">
    <property type="term" value="P:chorismate biosynthetic process"/>
    <property type="evidence" value="ECO:0007669"/>
    <property type="project" value="UniProtKB-UniRule"/>
</dbReference>
<dbReference type="CDD" id="cd07304">
    <property type="entry name" value="Chorismate_synthase"/>
    <property type="match status" value="1"/>
</dbReference>
<dbReference type="Gene3D" id="3.60.150.10">
    <property type="entry name" value="Chorismate synthase AroC"/>
    <property type="match status" value="1"/>
</dbReference>
<dbReference type="HAMAP" id="MF_00300">
    <property type="entry name" value="Chorismate_synth"/>
    <property type="match status" value="1"/>
</dbReference>
<dbReference type="InterPro" id="IPR000453">
    <property type="entry name" value="Chorismate_synth"/>
</dbReference>
<dbReference type="InterPro" id="IPR035904">
    <property type="entry name" value="Chorismate_synth_AroC_sf"/>
</dbReference>
<dbReference type="InterPro" id="IPR020541">
    <property type="entry name" value="Chorismate_synthase_CS"/>
</dbReference>
<dbReference type="NCBIfam" id="TIGR00033">
    <property type="entry name" value="aroC"/>
    <property type="match status" value="1"/>
</dbReference>
<dbReference type="NCBIfam" id="NF003793">
    <property type="entry name" value="PRK05382.1"/>
    <property type="match status" value="1"/>
</dbReference>
<dbReference type="PANTHER" id="PTHR21085">
    <property type="entry name" value="CHORISMATE SYNTHASE"/>
    <property type="match status" value="1"/>
</dbReference>
<dbReference type="PANTHER" id="PTHR21085:SF0">
    <property type="entry name" value="CHORISMATE SYNTHASE"/>
    <property type="match status" value="1"/>
</dbReference>
<dbReference type="Pfam" id="PF01264">
    <property type="entry name" value="Chorismate_synt"/>
    <property type="match status" value="1"/>
</dbReference>
<dbReference type="PIRSF" id="PIRSF001456">
    <property type="entry name" value="Chorismate_synth"/>
    <property type="match status" value="1"/>
</dbReference>
<dbReference type="SUPFAM" id="SSF103263">
    <property type="entry name" value="Chorismate synthase, AroC"/>
    <property type="match status" value="1"/>
</dbReference>
<dbReference type="PROSITE" id="PS00787">
    <property type="entry name" value="CHORISMATE_SYNTHASE_1"/>
    <property type="match status" value="1"/>
</dbReference>
<dbReference type="PROSITE" id="PS00788">
    <property type="entry name" value="CHORISMATE_SYNTHASE_2"/>
    <property type="match status" value="1"/>
</dbReference>
<dbReference type="PROSITE" id="PS00789">
    <property type="entry name" value="CHORISMATE_SYNTHASE_3"/>
    <property type="match status" value="1"/>
</dbReference>
<protein>
    <recommendedName>
        <fullName evidence="1">Chorismate synthase</fullName>
        <shortName evidence="1">CS</shortName>
        <ecNumber evidence="1">4.2.3.5</ecNumber>
    </recommendedName>
    <alternativeName>
        <fullName evidence="1">5-enolpyruvylshikimate-3-phosphate phospholyase</fullName>
    </alternativeName>
</protein>
<gene>
    <name evidence="1" type="primary">aroC</name>
    <name type="ordered locus">Mrad2831_2757</name>
</gene>
<organism>
    <name type="scientific">Methylobacterium radiotolerans (strain ATCC 27329 / DSM 1819 / JCM 2831 / NBRC 15690 / NCIMB 10815 / 0-1)</name>
    <dbReference type="NCBI Taxonomy" id="426355"/>
    <lineage>
        <taxon>Bacteria</taxon>
        <taxon>Pseudomonadati</taxon>
        <taxon>Pseudomonadota</taxon>
        <taxon>Alphaproteobacteria</taxon>
        <taxon>Hyphomicrobiales</taxon>
        <taxon>Methylobacteriaceae</taxon>
        <taxon>Methylobacterium</taxon>
    </lineage>
</organism>
<feature type="chain" id="PRO_1000115371" description="Chorismate synthase">
    <location>
        <begin position="1"/>
        <end position="366"/>
    </location>
</feature>
<feature type="binding site" evidence="1">
    <location>
        <position position="48"/>
    </location>
    <ligand>
        <name>NADP(+)</name>
        <dbReference type="ChEBI" id="CHEBI:58349"/>
    </ligand>
</feature>
<feature type="binding site" evidence="1">
    <location>
        <position position="54"/>
    </location>
    <ligand>
        <name>NADP(+)</name>
        <dbReference type="ChEBI" id="CHEBI:58349"/>
    </ligand>
</feature>
<feature type="binding site" evidence="1">
    <location>
        <begin position="132"/>
        <end position="134"/>
    </location>
    <ligand>
        <name>FMN</name>
        <dbReference type="ChEBI" id="CHEBI:58210"/>
    </ligand>
</feature>
<feature type="binding site" evidence="1">
    <location>
        <begin position="244"/>
        <end position="245"/>
    </location>
    <ligand>
        <name>FMN</name>
        <dbReference type="ChEBI" id="CHEBI:58210"/>
    </ligand>
</feature>
<feature type="binding site" evidence="1">
    <location>
        <position position="289"/>
    </location>
    <ligand>
        <name>FMN</name>
        <dbReference type="ChEBI" id="CHEBI:58210"/>
    </ligand>
</feature>
<feature type="binding site" evidence="1">
    <location>
        <begin position="304"/>
        <end position="308"/>
    </location>
    <ligand>
        <name>FMN</name>
        <dbReference type="ChEBI" id="CHEBI:58210"/>
    </ligand>
</feature>
<feature type="binding site" evidence="1">
    <location>
        <position position="330"/>
    </location>
    <ligand>
        <name>FMN</name>
        <dbReference type="ChEBI" id="CHEBI:58210"/>
    </ligand>
</feature>
<evidence type="ECO:0000255" key="1">
    <source>
        <dbReference type="HAMAP-Rule" id="MF_00300"/>
    </source>
</evidence>
<name>AROC_METRJ</name>
<keyword id="KW-0028">Amino-acid biosynthesis</keyword>
<keyword id="KW-0057">Aromatic amino acid biosynthesis</keyword>
<keyword id="KW-0274">FAD</keyword>
<keyword id="KW-0285">Flavoprotein</keyword>
<keyword id="KW-0288">FMN</keyword>
<keyword id="KW-0456">Lyase</keyword>
<keyword id="KW-0521">NADP</keyword>
<sequence>MSHNTFGHLFRVTTFGESHGVALGCVVDGCPPGLPLEAEEIQAELDRRKPGQSRFTTQRREPDQVKILSGVFADDRTGGRQLTTGTPIALMIENTDQRSKDYSEIRDSYRPGHADYTYDVKYGIRDYRGGGRSSARETAARVAAGAVARKVIPGVTIRAALVQMGPHAIDRSRWDWDAVGNNPFFCPDAERASFYETYLDGLRKDGSSVGAVIEVVAEGVPPGLGAPVYGKLDADLAAAMMSINAVKGVEIGDGFAAATLRGEDNADEMRAGNGGRPRFLANHAGGILGGISNGEPVVVRFAVKPTSSILTPRRSVTRDGAEVDLVTKGRHDPCVGIRAVPVAEAMMACVLADHYLRHRGQTAGGG</sequence>
<proteinExistence type="inferred from homology"/>